<name>HIS1_BURCJ</name>
<sequence>MTAPLTLALSKGRIFEETLPLLAAAGVQVAEDPETSRKLILPTTDPNLRVIIVRASDVPTYVEYGAADFGVAGKDVLVEHGGSGLYQPIDLNIARCRMSVAVPAGFDYANAVRQGARLRVATKYVETAREHFAAKGVHVDLIKLYGSMELAPLVGLADAIVDLVSSGGTLKANNLVEVEEIMAISSRLVVNQAALKLKRAALKPILDAFERASQNGG</sequence>
<feature type="chain" id="PRO_1000135274" description="ATP phosphoribosyltransferase">
    <location>
        <begin position="1"/>
        <end position="217"/>
    </location>
</feature>
<accession>B4E634</accession>
<reference key="1">
    <citation type="journal article" date="2009" name="J. Bacteriol.">
        <title>The genome of Burkholderia cenocepacia J2315, an epidemic pathogen of cystic fibrosis patients.</title>
        <authorList>
            <person name="Holden M.T."/>
            <person name="Seth-Smith H.M."/>
            <person name="Crossman L.C."/>
            <person name="Sebaihia M."/>
            <person name="Bentley S.D."/>
            <person name="Cerdeno-Tarraga A.M."/>
            <person name="Thomson N.R."/>
            <person name="Bason N."/>
            <person name="Quail M.A."/>
            <person name="Sharp S."/>
            <person name="Cherevach I."/>
            <person name="Churcher C."/>
            <person name="Goodhead I."/>
            <person name="Hauser H."/>
            <person name="Holroyd N."/>
            <person name="Mungall K."/>
            <person name="Scott P."/>
            <person name="Walker D."/>
            <person name="White B."/>
            <person name="Rose H."/>
            <person name="Iversen P."/>
            <person name="Mil-Homens D."/>
            <person name="Rocha E.P."/>
            <person name="Fialho A.M."/>
            <person name="Baldwin A."/>
            <person name="Dowson C."/>
            <person name="Barrell B.G."/>
            <person name="Govan J.R."/>
            <person name="Vandamme P."/>
            <person name="Hart C.A."/>
            <person name="Mahenthiralingam E."/>
            <person name="Parkhill J."/>
        </authorList>
    </citation>
    <scope>NUCLEOTIDE SEQUENCE [LARGE SCALE GENOMIC DNA]</scope>
    <source>
        <strain>ATCC BAA-245 / DSM 16553 / LMG 16656 / NCTC 13227 / J2315 / CF5610</strain>
    </source>
</reference>
<comment type="function">
    <text evidence="1">Catalyzes the condensation of ATP and 5-phosphoribose 1-diphosphate to form N'-(5'-phosphoribosyl)-ATP (PR-ATP). Has a crucial role in the pathway because the rate of histidine biosynthesis seems to be controlled primarily by regulation of HisG enzymatic activity.</text>
</comment>
<comment type="catalytic activity">
    <reaction evidence="1">
        <text>1-(5-phospho-beta-D-ribosyl)-ATP + diphosphate = 5-phospho-alpha-D-ribose 1-diphosphate + ATP</text>
        <dbReference type="Rhea" id="RHEA:18473"/>
        <dbReference type="ChEBI" id="CHEBI:30616"/>
        <dbReference type="ChEBI" id="CHEBI:33019"/>
        <dbReference type="ChEBI" id="CHEBI:58017"/>
        <dbReference type="ChEBI" id="CHEBI:73183"/>
        <dbReference type="EC" id="2.4.2.17"/>
    </reaction>
</comment>
<comment type="pathway">
    <text evidence="1">Amino-acid biosynthesis; L-histidine biosynthesis; L-histidine from 5-phospho-alpha-D-ribose 1-diphosphate: step 1/9.</text>
</comment>
<comment type="subunit">
    <text evidence="1">Heteromultimer composed of HisG and HisZ subunits.</text>
</comment>
<comment type="subcellular location">
    <subcellularLocation>
        <location evidence="1">Cytoplasm</location>
    </subcellularLocation>
</comment>
<comment type="domain">
    <text>Lacks the C-terminal regulatory region which is replaced by HisZ.</text>
</comment>
<comment type="similarity">
    <text evidence="1">Belongs to the ATP phosphoribosyltransferase family. Short subfamily.</text>
</comment>
<keyword id="KW-0028">Amino-acid biosynthesis</keyword>
<keyword id="KW-0067">ATP-binding</keyword>
<keyword id="KW-0963">Cytoplasm</keyword>
<keyword id="KW-0328">Glycosyltransferase</keyword>
<keyword id="KW-0368">Histidine biosynthesis</keyword>
<keyword id="KW-0547">Nucleotide-binding</keyword>
<keyword id="KW-0808">Transferase</keyword>
<gene>
    <name evidence="1" type="primary">hisG</name>
    <name type="ordered locus">BceJ2315_03130</name>
    <name type="ORF">BCAL0311</name>
</gene>
<proteinExistence type="inferred from homology"/>
<protein>
    <recommendedName>
        <fullName evidence="1">ATP phosphoribosyltransferase</fullName>
        <shortName evidence="1">ATP-PRT</shortName>
        <shortName evidence="1">ATP-PRTase</shortName>
        <ecNumber evidence="1">2.4.2.17</ecNumber>
    </recommendedName>
</protein>
<evidence type="ECO:0000255" key="1">
    <source>
        <dbReference type="HAMAP-Rule" id="MF_01018"/>
    </source>
</evidence>
<dbReference type="EC" id="2.4.2.17" evidence="1"/>
<dbReference type="EMBL" id="AM747720">
    <property type="protein sequence ID" value="CAR50621.1"/>
    <property type="molecule type" value="Genomic_DNA"/>
</dbReference>
<dbReference type="RefSeq" id="WP_006477129.1">
    <property type="nucleotide sequence ID" value="NC_011000.1"/>
</dbReference>
<dbReference type="SMR" id="B4E634"/>
<dbReference type="GeneID" id="56556860"/>
<dbReference type="KEGG" id="bcj:BCAL0311"/>
<dbReference type="eggNOG" id="COG0040">
    <property type="taxonomic scope" value="Bacteria"/>
</dbReference>
<dbReference type="HOGENOM" id="CLU_038115_2_0_4"/>
<dbReference type="BioCyc" id="BCEN216591:G1G1V-356-MONOMER"/>
<dbReference type="UniPathway" id="UPA00031">
    <property type="reaction ID" value="UER00006"/>
</dbReference>
<dbReference type="Proteomes" id="UP000001035">
    <property type="component" value="Chromosome 1"/>
</dbReference>
<dbReference type="GO" id="GO:0005737">
    <property type="term" value="C:cytoplasm"/>
    <property type="evidence" value="ECO:0007669"/>
    <property type="project" value="UniProtKB-SubCell"/>
</dbReference>
<dbReference type="GO" id="GO:0005524">
    <property type="term" value="F:ATP binding"/>
    <property type="evidence" value="ECO:0007669"/>
    <property type="project" value="UniProtKB-KW"/>
</dbReference>
<dbReference type="GO" id="GO:0003879">
    <property type="term" value="F:ATP phosphoribosyltransferase activity"/>
    <property type="evidence" value="ECO:0007669"/>
    <property type="project" value="UniProtKB-UniRule"/>
</dbReference>
<dbReference type="GO" id="GO:0000105">
    <property type="term" value="P:L-histidine biosynthetic process"/>
    <property type="evidence" value="ECO:0007669"/>
    <property type="project" value="UniProtKB-UniRule"/>
</dbReference>
<dbReference type="CDD" id="cd13595">
    <property type="entry name" value="PBP2_HisGs"/>
    <property type="match status" value="1"/>
</dbReference>
<dbReference type="FunFam" id="3.40.190.10:FF:000011">
    <property type="entry name" value="ATP phosphoribosyltransferase"/>
    <property type="match status" value="1"/>
</dbReference>
<dbReference type="Gene3D" id="3.40.190.10">
    <property type="entry name" value="Periplasmic binding protein-like II"/>
    <property type="match status" value="2"/>
</dbReference>
<dbReference type="HAMAP" id="MF_01018">
    <property type="entry name" value="HisG_Short"/>
    <property type="match status" value="1"/>
</dbReference>
<dbReference type="InterPro" id="IPR013820">
    <property type="entry name" value="ATP_PRibTrfase_cat"/>
</dbReference>
<dbReference type="InterPro" id="IPR018198">
    <property type="entry name" value="ATP_PRibTrfase_CS"/>
</dbReference>
<dbReference type="InterPro" id="IPR001348">
    <property type="entry name" value="ATP_PRibTrfase_HisG"/>
</dbReference>
<dbReference type="InterPro" id="IPR024893">
    <property type="entry name" value="ATP_PRibTrfase_HisG_short"/>
</dbReference>
<dbReference type="NCBIfam" id="TIGR00070">
    <property type="entry name" value="hisG"/>
    <property type="match status" value="1"/>
</dbReference>
<dbReference type="PANTHER" id="PTHR21403:SF8">
    <property type="entry name" value="ATP PHOSPHORIBOSYLTRANSFERASE"/>
    <property type="match status" value="1"/>
</dbReference>
<dbReference type="PANTHER" id="PTHR21403">
    <property type="entry name" value="ATP PHOSPHORIBOSYLTRANSFERASE ATP-PRTASE"/>
    <property type="match status" value="1"/>
</dbReference>
<dbReference type="Pfam" id="PF01634">
    <property type="entry name" value="HisG"/>
    <property type="match status" value="1"/>
</dbReference>
<dbReference type="SUPFAM" id="SSF53850">
    <property type="entry name" value="Periplasmic binding protein-like II"/>
    <property type="match status" value="1"/>
</dbReference>
<dbReference type="PROSITE" id="PS01316">
    <property type="entry name" value="ATP_P_PHORIBOSYLTR"/>
    <property type="match status" value="1"/>
</dbReference>
<organism>
    <name type="scientific">Burkholderia cenocepacia (strain ATCC BAA-245 / DSM 16553 / LMG 16656 / NCTC 13227 / J2315 / CF5610)</name>
    <name type="common">Burkholderia cepacia (strain J2315)</name>
    <dbReference type="NCBI Taxonomy" id="216591"/>
    <lineage>
        <taxon>Bacteria</taxon>
        <taxon>Pseudomonadati</taxon>
        <taxon>Pseudomonadota</taxon>
        <taxon>Betaproteobacteria</taxon>
        <taxon>Burkholderiales</taxon>
        <taxon>Burkholderiaceae</taxon>
        <taxon>Burkholderia</taxon>
        <taxon>Burkholderia cepacia complex</taxon>
    </lineage>
</organism>